<reference key="1">
    <citation type="submission" date="2006-08" db="EMBL/GenBank/DDBJ databases">
        <title>Complete sequence of Alkalilimnicola ehrilichei MLHE-1.</title>
        <authorList>
            <person name="Copeland A."/>
            <person name="Lucas S."/>
            <person name="Lapidus A."/>
            <person name="Barry K."/>
            <person name="Detter J.C."/>
            <person name="Glavina del Rio T."/>
            <person name="Hammon N."/>
            <person name="Israni S."/>
            <person name="Dalin E."/>
            <person name="Tice H."/>
            <person name="Pitluck S."/>
            <person name="Sims D."/>
            <person name="Brettin T."/>
            <person name="Bruce D."/>
            <person name="Han C."/>
            <person name="Tapia R."/>
            <person name="Gilna P."/>
            <person name="Schmutz J."/>
            <person name="Larimer F."/>
            <person name="Land M."/>
            <person name="Hauser L."/>
            <person name="Kyrpides N."/>
            <person name="Mikhailova N."/>
            <person name="Oremland R.S."/>
            <person name="Hoeft S.E."/>
            <person name="Switzer-Blum J."/>
            <person name="Kulp T."/>
            <person name="King G."/>
            <person name="Tabita R."/>
            <person name="Witte B."/>
            <person name="Santini J.M."/>
            <person name="Basu P."/>
            <person name="Hollibaugh J.T."/>
            <person name="Xie G."/>
            <person name="Stolz J.F."/>
            <person name="Richardson P."/>
        </authorList>
    </citation>
    <scope>NUCLEOTIDE SEQUENCE [LARGE SCALE GENOMIC DNA]</scope>
    <source>
        <strain>ATCC BAA-1101 / DSM 17681 / MLHE-1</strain>
    </source>
</reference>
<organism>
    <name type="scientific">Alkalilimnicola ehrlichii (strain ATCC BAA-1101 / DSM 17681 / MLHE-1)</name>
    <dbReference type="NCBI Taxonomy" id="187272"/>
    <lineage>
        <taxon>Bacteria</taxon>
        <taxon>Pseudomonadati</taxon>
        <taxon>Pseudomonadota</taxon>
        <taxon>Gammaproteobacteria</taxon>
        <taxon>Chromatiales</taxon>
        <taxon>Ectothiorhodospiraceae</taxon>
        <taxon>Alkalilimnicola</taxon>
    </lineage>
</organism>
<feature type="chain" id="PRO_1000022804" description="2-C-methyl-D-erythritol 2,4-cyclodiphosphate synthase">
    <location>
        <begin position="1"/>
        <end position="164"/>
    </location>
</feature>
<feature type="binding site" evidence="1">
    <location>
        <begin position="9"/>
        <end position="11"/>
    </location>
    <ligand>
        <name>4-CDP-2-C-methyl-D-erythritol 2-phosphate</name>
        <dbReference type="ChEBI" id="CHEBI:57919"/>
    </ligand>
</feature>
<feature type="binding site" evidence="1">
    <location>
        <position position="9"/>
    </location>
    <ligand>
        <name>a divalent metal cation</name>
        <dbReference type="ChEBI" id="CHEBI:60240"/>
    </ligand>
</feature>
<feature type="binding site" evidence="1">
    <location>
        <position position="11"/>
    </location>
    <ligand>
        <name>a divalent metal cation</name>
        <dbReference type="ChEBI" id="CHEBI:60240"/>
    </ligand>
</feature>
<feature type="binding site" evidence="1">
    <location>
        <begin position="36"/>
        <end position="37"/>
    </location>
    <ligand>
        <name>4-CDP-2-C-methyl-D-erythritol 2-phosphate</name>
        <dbReference type="ChEBI" id="CHEBI:57919"/>
    </ligand>
</feature>
<feature type="binding site" evidence="1">
    <location>
        <position position="44"/>
    </location>
    <ligand>
        <name>a divalent metal cation</name>
        <dbReference type="ChEBI" id="CHEBI:60240"/>
    </ligand>
</feature>
<feature type="binding site" evidence="1">
    <location>
        <begin position="58"/>
        <end position="60"/>
    </location>
    <ligand>
        <name>4-CDP-2-C-methyl-D-erythritol 2-phosphate</name>
        <dbReference type="ChEBI" id="CHEBI:57919"/>
    </ligand>
</feature>
<feature type="binding site" evidence="1">
    <location>
        <begin position="63"/>
        <end position="67"/>
    </location>
    <ligand>
        <name>4-CDP-2-C-methyl-D-erythritol 2-phosphate</name>
        <dbReference type="ChEBI" id="CHEBI:57919"/>
    </ligand>
</feature>
<feature type="binding site" evidence="1">
    <location>
        <begin position="134"/>
        <end position="137"/>
    </location>
    <ligand>
        <name>4-CDP-2-C-methyl-D-erythritol 2-phosphate</name>
        <dbReference type="ChEBI" id="CHEBI:57919"/>
    </ligand>
</feature>
<feature type="binding site" evidence="1">
    <location>
        <position position="141"/>
    </location>
    <ligand>
        <name>4-CDP-2-C-methyl-D-erythritol 2-phosphate</name>
        <dbReference type="ChEBI" id="CHEBI:57919"/>
    </ligand>
</feature>
<feature type="binding site" evidence="1">
    <location>
        <position position="144"/>
    </location>
    <ligand>
        <name>4-CDP-2-C-methyl-D-erythritol 2-phosphate</name>
        <dbReference type="ChEBI" id="CHEBI:57919"/>
    </ligand>
</feature>
<feature type="site" description="Transition state stabilizer" evidence="1">
    <location>
        <position position="36"/>
    </location>
</feature>
<feature type="site" description="Transition state stabilizer" evidence="1">
    <location>
        <position position="135"/>
    </location>
</feature>
<protein>
    <recommendedName>
        <fullName evidence="1">2-C-methyl-D-erythritol 2,4-cyclodiphosphate synthase</fullName>
        <shortName evidence="1">MECDP-synthase</shortName>
        <shortName evidence="1">MECPP-synthase</shortName>
        <shortName evidence="1">MECPS</shortName>
        <ecNumber evidence="1">4.6.1.12</ecNumber>
    </recommendedName>
</protein>
<proteinExistence type="inferred from homology"/>
<sequence>MIRVGQGFDAHRFGEPGTPLILGGVQVPHERGLAAHSDGDVLMHAVTDGLLGAAGEGDLGTHFPDSDDAYKGIDSRILLRDALQRVRAGGWRVVNVDATLIAQAPRMNPHVGAMRDHLAADLEVAPSAVNVKATTTERMGFPGRGEGIAAMAVVLIARDGFFEH</sequence>
<accession>Q0A7K7</accession>
<comment type="function">
    <text evidence="1">Involved in the biosynthesis of isopentenyl diphosphate (IPP) and dimethylallyl diphosphate (DMAPP), two major building blocks of isoprenoid compounds. Catalyzes the conversion of 4-diphosphocytidyl-2-C-methyl-D-erythritol 2-phosphate (CDP-ME2P) to 2-C-methyl-D-erythritol 2,4-cyclodiphosphate (ME-CPP) with a corresponding release of cytidine 5-monophosphate (CMP).</text>
</comment>
<comment type="catalytic activity">
    <reaction evidence="1">
        <text>4-CDP-2-C-methyl-D-erythritol 2-phosphate = 2-C-methyl-D-erythritol 2,4-cyclic diphosphate + CMP</text>
        <dbReference type="Rhea" id="RHEA:23864"/>
        <dbReference type="ChEBI" id="CHEBI:57919"/>
        <dbReference type="ChEBI" id="CHEBI:58483"/>
        <dbReference type="ChEBI" id="CHEBI:60377"/>
        <dbReference type="EC" id="4.6.1.12"/>
    </reaction>
</comment>
<comment type="cofactor">
    <cofactor evidence="1">
        <name>a divalent metal cation</name>
        <dbReference type="ChEBI" id="CHEBI:60240"/>
    </cofactor>
    <text evidence="1">Binds 1 divalent metal cation per subunit.</text>
</comment>
<comment type="pathway">
    <text evidence="1">Isoprenoid biosynthesis; isopentenyl diphosphate biosynthesis via DXP pathway; isopentenyl diphosphate from 1-deoxy-D-xylulose 5-phosphate: step 4/6.</text>
</comment>
<comment type="subunit">
    <text evidence="1">Homotrimer.</text>
</comment>
<comment type="similarity">
    <text evidence="1">Belongs to the IspF family.</text>
</comment>
<evidence type="ECO:0000255" key="1">
    <source>
        <dbReference type="HAMAP-Rule" id="MF_00107"/>
    </source>
</evidence>
<dbReference type="EC" id="4.6.1.12" evidence="1"/>
<dbReference type="EMBL" id="CP000453">
    <property type="protein sequence ID" value="ABI57180.1"/>
    <property type="molecule type" value="Genomic_DNA"/>
</dbReference>
<dbReference type="RefSeq" id="WP_011629574.1">
    <property type="nucleotide sequence ID" value="NC_008340.1"/>
</dbReference>
<dbReference type="SMR" id="Q0A7K7"/>
<dbReference type="KEGG" id="aeh:Mlg_1836"/>
<dbReference type="eggNOG" id="COG0245">
    <property type="taxonomic scope" value="Bacteria"/>
</dbReference>
<dbReference type="HOGENOM" id="CLU_084630_2_0_6"/>
<dbReference type="OrthoDB" id="9804336at2"/>
<dbReference type="UniPathway" id="UPA00056">
    <property type="reaction ID" value="UER00095"/>
</dbReference>
<dbReference type="Proteomes" id="UP000001962">
    <property type="component" value="Chromosome"/>
</dbReference>
<dbReference type="GO" id="GO:0008685">
    <property type="term" value="F:2-C-methyl-D-erythritol 2,4-cyclodiphosphate synthase activity"/>
    <property type="evidence" value="ECO:0007669"/>
    <property type="project" value="UniProtKB-UniRule"/>
</dbReference>
<dbReference type="GO" id="GO:0046872">
    <property type="term" value="F:metal ion binding"/>
    <property type="evidence" value="ECO:0007669"/>
    <property type="project" value="UniProtKB-KW"/>
</dbReference>
<dbReference type="GO" id="GO:0019288">
    <property type="term" value="P:isopentenyl diphosphate biosynthetic process, methylerythritol 4-phosphate pathway"/>
    <property type="evidence" value="ECO:0007669"/>
    <property type="project" value="UniProtKB-UniRule"/>
</dbReference>
<dbReference type="GO" id="GO:0016114">
    <property type="term" value="P:terpenoid biosynthetic process"/>
    <property type="evidence" value="ECO:0007669"/>
    <property type="project" value="InterPro"/>
</dbReference>
<dbReference type="CDD" id="cd00554">
    <property type="entry name" value="MECDP_synthase"/>
    <property type="match status" value="1"/>
</dbReference>
<dbReference type="FunFam" id="3.30.1330.50:FF:000001">
    <property type="entry name" value="2-C-methyl-D-erythritol 2,4-cyclodiphosphate synthase"/>
    <property type="match status" value="1"/>
</dbReference>
<dbReference type="Gene3D" id="3.30.1330.50">
    <property type="entry name" value="2-C-methyl-D-erythritol 2,4-cyclodiphosphate synthase"/>
    <property type="match status" value="1"/>
</dbReference>
<dbReference type="HAMAP" id="MF_00107">
    <property type="entry name" value="IspF"/>
    <property type="match status" value="1"/>
</dbReference>
<dbReference type="InterPro" id="IPR003526">
    <property type="entry name" value="MECDP_synthase"/>
</dbReference>
<dbReference type="InterPro" id="IPR020555">
    <property type="entry name" value="MECDP_synthase_CS"/>
</dbReference>
<dbReference type="InterPro" id="IPR036571">
    <property type="entry name" value="MECDP_synthase_sf"/>
</dbReference>
<dbReference type="NCBIfam" id="TIGR00151">
    <property type="entry name" value="ispF"/>
    <property type="match status" value="1"/>
</dbReference>
<dbReference type="PANTHER" id="PTHR43181">
    <property type="entry name" value="2-C-METHYL-D-ERYTHRITOL 2,4-CYCLODIPHOSPHATE SYNTHASE, CHLOROPLASTIC"/>
    <property type="match status" value="1"/>
</dbReference>
<dbReference type="PANTHER" id="PTHR43181:SF1">
    <property type="entry name" value="2-C-METHYL-D-ERYTHRITOL 2,4-CYCLODIPHOSPHATE SYNTHASE, CHLOROPLASTIC"/>
    <property type="match status" value="1"/>
</dbReference>
<dbReference type="Pfam" id="PF02542">
    <property type="entry name" value="YgbB"/>
    <property type="match status" value="1"/>
</dbReference>
<dbReference type="SUPFAM" id="SSF69765">
    <property type="entry name" value="IpsF-like"/>
    <property type="match status" value="1"/>
</dbReference>
<dbReference type="PROSITE" id="PS01350">
    <property type="entry name" value="ISPF"/>
    <property type="match status" value="1"/>
</dbReference>
<keyword id="KW-0414">Isoprene biosynthesis</keyword>
<keyword id="KW-0456">Lyase</keyword>
<keyword id="KW-0479">Metal-binding</keyword>
<keyword id="KW-1185">Reference proteome</keyword>
<name>ISPF_ALKEH</name>
<gene>
    <name evidence="1" type="primary">ispF</name>
    <name type="ordered locus">Mlg_1836</name>
</gene>